<name>XERS_STRZJ</name>
<gene>
    <name evidence="1" type="primary">xerS</name>
    <name type="ordered locus">SPJ_1078</name>
</gene>
<organism>
    <name type="scientific">Streptococcus pneumoniae (strain JJA)</name>
    <dbReference type="NCBI Taxonomy" id="488222"/>
    <lineage>
        <taxon>Bacteria</taxon>
        <taxon>Bacillati</taxon>
        <taxon>Bacillota</taxon>
        <taxon>Bacilli</taxon>
        <taxon>Lactobacillales</taxon>
        <taxon>Streptococcaceae</taxon>
        <taxon>Streptococcus</taxon>
    </lineage>
</organism>
<reference key="1">
    <citation type="journal article" date="2010" name="Genome Biol.">
        <title>Structure and dynamics of the pan-genome of Streptococcus pneumoniae and closely related species.</title>
        <authorList>
            <person name="Donati C."/>
            <person name="Hiller N.L."/>
            <person name="Tettelin H."/>
            <person name="Muzzi A."/>
            <person name="Croucher N.J."/>
            <person name="Angiuoli S.V."/>
            <person name="Oggioni M."/>
            <person name="Dunning Hotopp J.C."/>
            <person name="Hu F.Z."/>
            <person name="Riley D.R."/>
            <person name="Covacci A."/>
            <person name="Mitchell T.J."/>
            <person name="Bentley S.D."/>
            <person name="Kilian M."/>
            <person name="Ehrlich G.D."/>
            <person name="Rappuoli R."/>
            <person name="Moxon E.R."/>
            <person name="Masignani V."/>
        </authorList>
    </citation>
    <scope>NUCLEOTIDE SEQUENCE [LARGE SCALE GENOMIC DNA]</scope>
    <source>
        <strain>JJA</strain>
    </source>
</reference>
<feature type="chain" id="PRO_1000187918" description="Tyrosine recombinase XerS">
    <location>
        <begin position="1"/>
        <end position="356"/>
    </location>
</feature>
<feature type="domain" description="Core-binding (CB)" evidence="3">
    <location>
        <begin position="16"/>
        <end position="121"/>
    </location>
</feature>
<feature type="domain" description="Tyr recombinase" evidence="2">
    <location>
        <begin position="169"/>
        <end position="354"/>
    </location>
</feature>
<feature type="active site" evidence="1">
    <location>
        <position position="210"/>
    </location>
</feature>
<feature type="active site" evidence="1">
    <location>
        <position position="234"/>
    </location>
</feature>
<feature type="active site" evidence="1">
    <location>
        <position position="306"/>
    </location>
</feature>
<feature type="active site" evidence="1">
    <location>
        <position position="309"/>
    </location>
</feature>
<feature type="active site" evidence="1">
    <location>
        <position position="332"/>
    </location>
</feature>
<feature type="active site" description="O-(3'-phospho-DNA)-tyrosine intermediate" evidence="1">
    <location>
        <position position="341"/>
    </location>
</feature>
<dbReference type="EMBL" id="CP000919">
    <property type="protein sequence ID" value="ACO18432.1"/>
    <property type="molecule type" value="Genomic_DNA"/>
</dbReference>
<dbReference type="RefSeq" id="WP_000817882.1">
    <property type="nucleotide sequence ID" value="NC_012466.1"/>
</dbReference>
<dbReference type="SMR" id="C1CEC5"/>
<dbReference type="KEGG" id="sjj:SPJ_1078"/>
<dbReference type="HOGENOM" id="CLU_027562_9_6_9"/>
<dbReference type="Proteomes" id="UP000002206">
    <property type="component" value="Chromosome"/>
</dbReference>
<dbReference type="GO" id="GO:0005737">
    <property type="term" value="C:cytoplasm"/>
    <property type="evidence" value="ECO:0007669"/>
    <property type="project" value="UniProtKB-SubCell"/>
</dbReference>
<dbReference type="GO" id="GO:0003677">
    <property type="term" value="F:DNA binding"/>
    <property type="evidence" value="ECO:0007669"/>
    <property type="project" value="UniProtKB-KW"/>
</dbReference>
<dbReference type="GO" id="GO:0009037">
    <property type="term" value="F:tyrosine-based site-specific recombinase activity"/>
    <property type="evidence" value="ECO:0007669"/>
    <property type="project" value="UniProtKB-UniRule"/>
</dbReference>
<dbReference type="GO" id="GO:0051301">
    <property type="term" value="P:cell division"/>
    <property type="evidence" value="ECO:0007669"/>
    <property type="project" value="UniProtKB-KW"/>
</dbReference>
<dbReference type="GO" id="GO:0007059">
    <property type="term" value="P:chromosome segregation"/>
    <property type="evidence" value="ECO:0007669"/>
    <property type="project" value="UniProtKB-UniRule"/>
</dbReference>
<dbReference type="GO" id="GO:0006310">
    <property type="term" value="P:DNA recombination"/>
    <property type="evidence" value="ECO:0007669"/>
    <property type="project" value="UniProtKB-UniRule"/>
</dbReference>
<dbReference type="Gene3D" id="1.10.150.130">
    <property type="match status" value="1"/>
</dbReference>
<dbReference type="Gene3D" id="1.10.443.10">
    <property type="entry name" value="Intergrase catalytic core"/>
    <property type="match status" value="1"/>
</dbReference>
<dbReference type="HAMAP" id="MF_01816">
    <property type="entry name" value="Recomb_XerS"/>
    <property type="match status" value="1"/>
</dbReference>
<dbReference type="InterPro" id="IPR044068">
    <property type="entry name" value="CB"/>
</dbReference>
<dbReference type="InterPro" id="IPR011010">
    <property type="entry name" value="DNA_brk_join_enz"/>
</dbReference>
<dbReference type="InterPro" id="IPR013762">
    <property type="entry name" value="Integrase-like_cat_sf"/>
</dbReference>
<dbReference type="InterPro" id="IPR002104">
    <property type="entry name" value="Integrase_catalytic"/>
</dbReference>
<dbReference type="InterPro" id="IPR010998">
    <property type="entry name" value="Integrase_recombinase_N"/>
</dbReference>
<dbReference type="InterPro" id="IPR004107">
    <property type="entry name" value="Integrase_SAM-like_N"/>
</dbReference>
<dbReference type="InterPro" id="IPR023670">
    <property type="entry name" value="Recomb_XerS"/>
</dbReference>
<dbReference type="InterPro" id="IPR050090">
    <property type="entry name" value="Tyrosine_recombinase_XerCD"/>
</dbReference>
<dbReference type="NCBIfam" id="NF003462">
    <property type="entry name" value="PRK05084.1"/>
    <property type="match status" value="1"/>
</dbReference>
<dbReference type="PANTHER" id="PTHR30349">
    <property type="entry name" value="PHAGE INTEGRASE-RELATED"/>
    <property type="match status" value="1"/>
</dbReference>
<dbReference type="PANTHER" id="PTHR30349:SF77">
    <property type="entry name" value="TYROSINE RECOMBINASE XERC"/>
    <property type="match status" value="1"/>
</dbReference>
<dbReference type="Pfam" id="PF02899">
    <property type="entry name" value="Phage_int_SAM_1"/>
    <property type="match status" value="1"/>
</dbReference>
<dbReference type="Pfam" id="PF00589">
    <property type="entry name" value="Phage_integrase"/>
    <property type="match status" value="1"/>
</dbReference>
<dbReference type="SUPFAM" id="SSF56349">
    <property type="entry name" value="DNA breaking-rejoining enzymes"/>
    <property type="match status" value="1"/>
</dbReference>
<dbReference type="PROSITE" id="PS51900">
    <property type="entry name" value="CB"/>
    <property type="match status" value="1"/>
</dbReference>
<dbReference type="PROSITE" id="PS51898">
    <property type="entry name" value="TYR_RECOMBINASE"/>
    <property type="match status" value="1"/>
</dbReference>
<protein>
    <recommendedName>
        <fullName evidence="1">Tyrosine recombinase XerS</fullName>
    </recommendedName>
</protein>
<comment type="function">
    <text evidence="1">Site-specific tyrosine recombinase, which acts by catalyzing the cutting and rejoining of the recombining DNA molecules. Essential to convert dimers of the bacterial chromosome into monomers to permit their segregation at cell division.</text>
</comment>
<comment type="activity regulation">
    <text evidence="1">FtsK is required for recombination.</text>
</comment>
<comment type="subcellular location">
    <subcellularLocation>
        <location evidence="1">Cytoplasm</location>
    </subcellularLocation>
</comment>
<comment type="similarity">
    <text evidence="1">Belongs to the 'phage' integrase family. XerS subfamily.</text>
</comment>
<sequence>MKREILLERIDKLKQLMPWYVLEYYQSKLAVPYSFTTLYEYLKEYDRFFSWVLESGISNADKISDIPLSVLENMSKKDMESFILYLRERPLLNANTTKQGVSQTTINRTLSALSSLYKYLTEEVENDQGEPYFYRNVMKKVSTKKKKETLAARAENIKQKLFLGDETEGFLTYIDQEHPQQLSNRALSSFNKNKERDLAIIALLLASGVRLSEAVNLDLRDLNLKMMVIDVTRKGGKRDSVNVAAFAKPYLENYLAIRNQRYKTEKTDTALFLTLYRGVPNRIDASSVEKMVAKYSEDFKVRVTPHKLRHTLATRLYDATKSQVLVSHQLGHASTQVTDLYTHIVNDEQKNALDSL</sequence>
<proteinExistence type="inferred from homology"/>
<accession>C1CEC5</accession>
<keyword id="KW-0131">Cell cycle</keyword>
<keyword id="KW-0132">Cell division</keyword>
<keyword id="KW-0159">Chromosome partition</keyword>
<keyword id="KW-0963">Cytoplasm</keyword>
<keyword id="KW-0229">DNA integration</keyword>
<keyword id="KW-0233">DNA recombination</keyword>
<keyword id="KW-0238">DNA-binding</keyword>
<evidence type="ECO:0000255" key="1">
    <source>
        <dbReference type="HAMAP-Rule" id="MF_01816"/>
    </source>
</evidence>
<evidence type="ECO:0000255" key="2">
    <source>
        <dbReference type="PROSITE-ProRule" id="PRU01246"/>
    </source>
</evidence>
<evidence type="ECO:0000255" key="3">
    <source>
        <dbReference type="PROSITE-ProRule" id="PRU01248"/>
    </source>
</evidence>